<proteinExistence type="inferred from homology"/>
<sequence length="244" mass="28196">MKINFLILTTFIILTSLGFWQLSRLKEKKLFLDSIQSHIISPGINLEKVQENLLYHKVKITGQFLPNKDIYLYGIRLMAMEKDGYYLVTPFKTIADQVILVVRGWFSNRNKNIIMKATNNQIHEIIGVIMPSEKTLSYLPANDIKNNVWLTLDLKEASKALKLNLENFYIIAEGKDISNLDILLPLSLNHLALIKNDHLEYAITWFGLAIFLIVIYVIYRHSSNIPVPVNKQLKSLEQKNNQKN</sequence>
<reference key="1">
    <citation type="journal article" date="1998" name="Nature">
        <title>The genome sequence of Rickettsia prowazekii and the origin of mitochondria.</title>
        <authorList>
            <person name="Andersson S.G.E."/>
            <person name="Zomorodipour A."/>
            <person name="Andersson J.O."/>
            <person name="Sicheritz-Ponten T."/>
            <person name="Alsmark U.C.M."/>
            <person name="Podowski R.M."/>
            <person name="Naeslund A.K."/>
            <person name="Eriksson A.-S."/>
            <person name="Winkler H.H."/>
            <person name="Kurland C.G."/>
        </authorList>
    </citation>
    <scope>NUCLEOTIDE SEQUENCE [LARGE SCALE GENOMIC DNA]</scope>
    <source>
        <strain>Madrid E</strain>
    </source>
</reference>
<name>SURF1_RICPR</name>
<comment type="subcellular location">
    <subcellularLocation>
        <location evidence="2">Cell membrane</location>
        <topology evidence="2">Multi-pass membrane protein</topology>
    </subcellularLocation>
</comment>
<comment type="similarity">
    <text evidence="2">Belongs to the SURF1 family.</text>
</comment>
<dbReference type="EMBL" id="AJ235273">
    <property type="protein sequence ID" value="CAA15162.1"/>
    <property type="molecule type" value="Genomic_DNA"/>
</dbReference>
<dbReference type="PIR" id="B71633">
    <property type="entry name" value="B71633"/>
</dbReference>
<dbReference type="RefSeq" id="NP_221086.1">
    <property type="nucleotide sequence ID" value="NC_000963.1"/>
</dbReference>
<dbReference type="RefSeq" id="WP_004599627.1">
    <property type="nucleotide sequence ID" value="NC_000963.1"/>
</dbReference>
<dbReference type="SMR" id="Q9ZCJ8"/>
<dbReference type="STRING" id="272947.gene:17555803"/>
<dbReference type="EnsemblBacteria" id="CAA15162">
    <property type="protein sequence ID" value="CAA15162"/>
    <property type="gene ID" value="CAA15162"/>
</dbReference>
<dbReference type="KEGG" id="rpr:RP733"/>
<dbReference type="PATRIC" id="fig|272947.5.peg.767"/>
<dbReference type="eggNOG" id="COG3346">
    <property type="taxonomic scope" value="Bacteria"/>
</dbReference>
<dbReference type="HOGENOM" id="CLU_047737_4_1_5"/>
<dbReference type="OrthoDB" id="6079986at2"/>
<dbReference type="Proteomes" id="UP000002480">
    <property type="component" value="Chromosome"/>
</dbReference>
<dbReference type="GO" id="GO:0005886">
    <property type="term" value="C:plasma membrane"/>
    <property type="evidence" value="ECO:0007669"/>
    <property type="project" value="UniProtKB-SubCell"/>
</dbReference>
<dbReference type="CDD" id="cd06662">
    <property type="entry name" value="SURF1"/>
    <property type="match status" value="1"/>
</dbReference>
<dbReference type="InterPro" id="IPR002994">
    <property type="entry name" value="Surf1/Shy1"/>
</dbReference>
<dbReference type="InterPro" id="IPR045214">
    <property type="entry name" value="Surf1/Surf4"/>
</dbReference>
<dbReference type="PANTHER" id="PTHR23427">
    <property type="entry name" value="SURFEIT LOCUS PROTEIN"/>
    <property type="match status" value="1"/>
</dbReference>
<dbReference type="PANTHER" id="PTHR23427:SF2">
    <property type="entry name" value="SURFEIT LOCUS PROTEIN 1"/>
    <property type="match status" value="1"/>
</dbReference>
<dbReference type="Pfam" id="PF02104">
    <property type="entry name" value="SURF1"/>
    <property type="match status" value="1"/>
</dbReference>
<dbReference type="PROSITE" id="PS50895">
    <property type="entry name" value="SURF1"/>
    <property type="match status" value="1"/>
</dbReference>
<keyword id="KW-1003">Cell membrane</keyword>
<keyword id="KW-0472">Membrane</keyword>
<keyword id="KW-1185">Reference proteome</keyword>
<keyword id="KW-0812">Transmembrane</keyword>
<keyword id="KW-1133">Transmembrane helix</keyword>
<feature type="chain" id="PRO_0000215661" description="SURF1-like protein">
    <location>
        <begin position="1"/>
        <end position="244"/>
    </location>
</feature>
<feature type="transmembrane region" description="Helical" evidence="1">
    <location>
        <begin position="7"/>
        <end position="23"/>
    </location>
</feature>
<feature type="transmembrane region" description="Helical" evidence="1">
    <location>
        <begin position="201"/>
        <end position="219"/>
    </location>
</feature>
<organism>
    <name type="scientific">Rickettsia prowazekii (strain Madrid E)</name>
    <dbReference type="NCBI Taxonomy" id="272947"/>
    <lineage>
        <taxon>Bacteria</taxon>
        <taxon>Pseudomonadati</taxon>
        <taxon>Pseudomonadota</taxon>
        <taxon>Alphaproteobacteria</taxon>
        <taxon>Rickettsiales</taxon>
        <taxon>Rickettsiaceae</taxon>
        <taxon>Rickettsieae</taxon>
        <taxon>Rickettsia</taxon>
        <taxon>typhus group</taxon>
    </lineage>
</organism>
<gene>
    <name type="ordered locus">RP733</name>
</gene>
<evidence type="ECO:0000255" key="1"/>
<evidence type="ECO:0000305" key="2"/>
<accession>Q9ZCJ8</accession>
<protein>
    <recommendedName>
        <fullName>SURF1-like protein</fullName>
    </recommendedName>
</protein>